<protein>
    <recommendedName>
        <fullName evidence="1">Cytochrome c biogenesis ATP-binding export protein CcmA</fullName>
        <ecNumber evidence="1">7.6.2.5</ecNumber>
    </recommendedName>
    <alternativeName>
        <fullName evidence="1">Heme exporter protein A</fullName>
    </alternativeName>
</protein>
<accession>Q8FFR2</accession>
<comment type="function">
    <text evidence="1">Part of the ABC transporter complex CcmAB involved in the biogenesis of c-type cytochromes; once thought to export heme, this seems not to be the case, but its exact role is uncertain. Responsible for energy coupling to the transport system.</text>
</comment>
<comment type="catalytic activity">
    <reaction evidence="1">
        <text>heme b(in) + ATP + H2O = heme b(out) + ADP + phosphate + H(+)</text>
        <dbReference type="Rhea" id="RHEA:19261"/>
        <dbReference type="ChEBI" id="CHEBI:15377"/>
        <dbReference type="ChEBI" id="CHEBI:15378"/>
        <dbReference type="ChEBI" id="CHEBI:30616"/>
        <dbReference type="ChEBI" id="CHEBI:43474"/>
        <dbReference type="ChEBI" id="CHEBI:60344"/>
        <dbReference type="ChEBI" id="CHEBI:456216"/>
        <dbReference type="EC" id="7.6.2.5"/>
    </reaction>
</comment>
<comment type="subunit">
    <text evidence="1">The complex is composed of two ATP-binding proteins (CcmA) and two transmembrane proteins (CcmB).</text>
</comment>
<comment type="subcellular location">
    <subcellularLocation>
        <location evidence="1">Cell inner membrane</location>
        <topology evidence="1">Peripheral membrane protein</topology>
    </subcellularLocation>
</comment>
<comment type="similarity">
    <text evidence="1">Belongs to the ABC transporter superfamily. CcmA exporter (TC 3.A.1.107) family.</text>
</comment>
<reference key="1">
    <citation type="journal article" date="2002" name="Proc. Natl. Acad. Sci. U.S.A.">
        <title>Extensive mosaic structure revealed by the complete genome sequence of uropathogenic Escherichia coli.</title>
        <authorList>
            <person name="Welch R.A."/>
            <person name="Burland V."/>
            <person name="Plunkett G. III"/>
            <person name="Redford P."/>
            <person name="Roesch P."/>
            <person name="Rasko D."/>
            <person name="Buckles E.L."/>
            <person name="Liou S.-R."/>
            <person name="Boutin A."/>
            <person name="Hackett J."/>
            <person name="Stroud D."/>
            <person name="Mayhew G.F."/>
            <person name="Rose D.J."/>
            <person name="Zhou S."/>
            <person name="Schwartz D.C."/>
            <person name="Perna N.T."/>
            <person name="Mobley H.L.T."/>
            <person name="Donnenberg M.S."/>
            <person name="Blattner F.R."/>
        </authorList>
    </citation>
    <scope>NUCLEOTIDE SEQUENCE [LARGE SCALE GENOMIC DNA]</scope>
    <source>
        <strain>CFT073 / ATCC 700928 / UPEC</strain>
    </source>
</reference>
<name>CCMA_ECOL6</name>
<sequence>MGMLEARELLCERDERTLFSGLSFTLNAGEWVQITGSNGAGKTTLLRLLTGLSRPDAGDVLWQGQPLHQVRDSYHQNLLWIGHQPGIKTRLTALENLHFYHRDGDTAQCLEALAQAGLAGFEDIPVNQLSAGQQRRVALARLWLTRATLWILDEPFTAIDVNGVDRLTQRMAQHTEQGGIVILTTHQPLNVAESKIRRISLTQTGAA</sequence>
<gene>
    <name evidence="1" type="primary">ccmA</name>
    <name type="ordered locus">c2738</name>
</gene>
<keyword id="KW-0067">ATP-binding</keyword>
<keyword id="KW-0997">Cell inner membrane</keyword>
<keyword id="KW-1003">Cell membrane</keyword>
<keyword id="KW-0201">Cytochrome c-type biogenesis</keyword>
<keyword id="KW-0472">Membrane</keyword>
<keyword id="KW-0547">Nucleotide-binding</keyword>
<keyword id="KW-1185">Reference proteome</keyword>
<keyword id="KW-1278">Translocase</keyword>
<keyword id="KW-0813">Transport</keyword>
<proteinExistence type="inferred from homology"/>
<feature type="chain" id="PRO_0000092179" description="Cytochrome c biogenesis ATP-binding export protein CcmA">
    <location>
        <begin position="1"/>
        <end position="207"/>
    </location>
</feature>
<feature type="domain" description="ABC transporter" evidence="1">
    <location>
        <begin position="4"/>
        <end position="207"/>
    </location>
</feature>
<feature type="binding site" evidence="1">
    <location>
        <begin position="36"/>
        <end position="43"/>
    </location>
    <ligand>
        <name>ATP</name>
        <dbReference type="ChEBI" id="CHEBI:30616"/>
    </ligand>
</feature>
<organism>
    <name type="scientific">Escherichia coli O6:H1 (strain CFT073 / ATCC 700928 / UPEC)</name>
    <dbReference type="NCBI Taxonomy" id="199310"/>
    <lineage>
        <taxon>Bacteria</taxon>
        <taxon>Pseudomonadati</taxon>
        <taxon>Pseudomonadota</taxon>
        <taxon>Gammaproteobacteria</taxon>
        <taxon>Enterobacterales</taxon>
        <taxon>Enterobacteriaceae</taxon>
        <taxon>Escherichia</taxon>
    </lineage>
</organism>
<dbReference type="EC" id="7.6.2.5" evidence="1"/>
<dbReference type="EMBL" id="AE014075">
    <property type="protein sequence ID" value="AAN81192.1"/>
    <property type="molecule type" value="Genomic_DNA"/>
</dbReference>
<dbReference type="RefSeq" id="WP_000525567.1">
    <property type="nucleotide sequence ID" value="NZ_CP051263.1"/>
</dbReference>
<dbReference type="SMR" id="Q8FFR2"/>
<dbReference type="STRING" id="199310.c2738"/>
<dbReference type="KEGG" id="ecc:c2738"/>
<dbReference type="eggNOG" id="COG4133">
    <property type="taxonomic scope" value="Bacteria"/>
</dbReference>
<dbReference type="HOGENOM" id="CLU_000604_1_2_6"/>
<dbReference type="BioCyc" id="ECOL199310:C2738-MONOMER"/>
<dbReference type="Proteomes" id="UP000001410">
    <property type="component" value="Chromosome"/>
</dbReference>
<dbReference type="GO" id="GO:0005886">
    <property type="term" value="C:plasma membrane"/>
    <property type="evidence" value="ECO:0007669"/>
    <property type="project" value="UniProtKB-SubCell"/>
</dbReference>
<dbReference type="GO" id="GO:0015439">
    <property type="term" value="F:ABC-type heme transporter activity"/>
    <property type="evidence" value="ECO:0007669"/>
    <property type="project" value="UniProtKB-EC"/>
</dbReference>
<dbReference type="GO" id="GO:0005524">
    <property type="term" value="F:ATP binding"/>
    <property type="evidence" value="ECO:0007669"/>
    <property type="project" value="UniProtKB-KW"/>
</dbReference>
<dbReference type="GO" id="GO:0016887">
    <property type="term" value="F:ATP hydrolysis activity"/>
    <property type="evidence" value="ECO:0007669"/>
    <property type="project" value="InterPro"/>
</dbReference>
<dbReference type="GO" id="GO:0017004">
    <property type="term" value="P:cytochrome complex assembly"/>
    <property type="evidence" value="ECO:0007669"/>
    <property type="project" value="UniProtKB-KW"/>
</dbReference>
<dbReference type="CDD" id="cd03231">
    <property type="entry name" value="ABC_CcmA_heme_exporter"/>
    <property type="match status" value="1"/>
</dbReference>
<dbReference type="FunFam" id="3.40.50.300:FF:001098">
    <property type="entry name" value="Cytochrome c biogenesis ATP-binding export protein CcmA"/>
    <property type="match status" value="1"/>
</dbReference>
<dbReference type="Gene3D" id="3.40.50.300">
    <property type="entry name" value="P-loop containing nucleotide triphosphate hydrolases"/>
    <property type="match status" value="1"/>
</dbReference>
<dbReference type="InterPro" id="IPR003593">
    <property type="entry name" value="AAA+_ATPase"/>
</dbReference>
<dbReference type="InterPro" id="IPR003439">
    <property type="entry name" value="ABC_transporter-like_ATP-bd"/>
</dbReference>
<dbReference type="InterPro" id="IPR017871">
    <property type="entry name" value="ABC_transporter-like_CS"/>
</dbReference>
<dbReference type="InterPro" id="IPR005895">
    <property type="entry name" value="ABC_transptr_haem_export_CcmA"/>
</dbReference>
<dbReference type="InterPro" id="IPR027417">
    <property type="entry name" value="P-loop_NTPase"/>
</dbReference>
<dbReference type="NCBIfam" id="TIGR01189">
    <property type="entry name" value="ccmA"/>
    <property type="match status" value="1"/>
</dbReference>
<dbReference type="NCBIfam" id="NF010061">
    <property type="entry name" value="PRK13538.1"/>
    <property type="match status" value="1"/>
</dbReference>
<dbReference type="PANTHER" id="PTHR43499">
    <property type="entry name" value="ABC TRANSPORTER I FAMILY MEMBER 1"/>
    <property type="match status" value="1"/>
</dbReference>
<dbReference type="PANTHER" id="PTHR43499:SF1">
    <property type="entry name" value="ABC TRANSPORTER I FAMILY MEMBER 1"/>
    <property type="match status" value="1"/>
</dbReference>
<dbReference type="Pfam" id="PF00005">
    <property type="entry name" value="ABC_tran"/>
    <property type="match status" value="1"/>
</dbReference>
<dbReference type="SMART" id="SM00382">
    <property type="entry name" value="AAA"/>
    <property type="match status" value="1"/>
</dbReference>
<dbReference type="SUPFAM" id="SSF52540">
    <property type="entry name" value="P-loop containing nucleoside triphosphate hydrolases"/>
    <property type="match status" value="1"/>
</dbReference>
<dbReference type="PROSITE" id="PS00211">
    <property type="entry name" value="ABC_TRANSPORTER_1"/>
    <property type="match status" value="1"/>
</dbReference>
<dbReference type="PROSITE" id="PS50893">
    <property type="entry name" value="ABC_TRANSPORTER_2"/>
    <property type="match status" value="1"/>
</dbReference>
<dbReference type="PROSITE" id="PS51243">
    <property type="entry name" value="CCMA"/>
    <property type="match status" value="1"/>
</dbReference>
<evidence type="ECO:0000255" key="1">
    <source>
        <dbReference type="HAMAP-Rule" id="MF_01707"/>
    </source>
</evidence>